<comment type="interaction">
    <interactant intactId="EBI-9057780">
        <id>Q96KN1</id>
    </interactant>
    <interactant intactId="EBI-541426">
        <id>Q9BXS5</id>
        <label>AP1M1</label>
    </interactant>
    <organismsDiffer>false</organismsDiffer>
    <experiments>3</experiments>
</comment>
<comment type="interaction">
    <interactant intactId="EBI-9057780">
        <id>Q96KN1</id>
    </interactant>
    <interactant intactId="EBI-1180783">
        <id>O96017</id>
        <label>CHEK2</label>
    </interactant>
    <organismsDiffer>false</organismsDiffer>
    <experiments>3</experiments>
</comment>
<comment type="interaction">
    <interactant intactId="EBI-9057780">
        <id>Q96KN1</id>
    </interactant>
    <interactant intactId="EBI-742054">
        <id>Q96D03</id>
        <label>DDIT4L</label>
    </interactant>
    <organismsDiffer>false</organismsDiffer>
    <experiments>3</experiments>
</comment>
<comment type="interaction">
    <interactant intactId="EBI-9057780">
        <id>Q96KN1</id>
    </interactant>
    <interactant intactId="EBI-3920273">
        <id>O60551</id>
        <label>NMT2</label>
    </interactant>
    <organismsDiffer>false</organismsDiffer>
    <experiments>3</experiments>
</comment>
<comment type="interaction">
    <interactant intactId="EBI-9057780">
        <id>Q96KN1</id>
    </interactant>
    <interactant intactId="EBI-297202">
        <id>Q06609</id>
        <label>RAD51</label>
    </interactant>
    <organismsDiffer>false</organismsDiffer>
    <experiments>4</experiments>
</comment>
<comment type="interaction">
    <interactant intactId="EBI-9057780">
        <id>Q96KN1</id>
    </interactant>
    <interactant intactId="EBI-529518">
        <id>Q86VP1</id>
        <label>TAX1BP1</label>
    </interactant>
    <organismsDiffer>false</organismsDiffer>
    <experiments>3</experiments>
</comment>
<comment type="interaction">
    <interactant intactId="EBI-9057780">
        <id>Q96KN1</id>
    </interactant>
    <interactant intactId="EBI-2871776">
        <id>P06132</id>
        <label>UROD</label>
    </interactant>
    <organismsDiffer>false</organismsDiffer>
    <experiments>7</experiments>
</comment>
<comment type="tissue specificity">
    <text evidence="3">Expressed in esophageal squamous cell carcinomas.</text>
</comment>
<comment type="similarity">
    <text evidence="4">Belongs to the LRATD family.</text>
</comment>
<dbReference type="EMBL" id="AJ417849">
    <property type="protein sequence ID" value="CAD10629.1"/>
    <property type="molecule type" value="mRNA"/>
</dbReference>
<dbReference type="EMBL" id="BC052957">
    <property type="protein sequence ID" value="AAH52957.1"/>
    <property type="molecule type" value="mRNA"/>
</dbReference>
<dbReference type="CCDS" id="CCDS6358.1"/>
<dbReference type="RefSeq" id="NP_777571.1">
    <property type="nucleotide sequence ID" value="NM_174911.5"/>
</dbReference>
<dbReference type="RefSeq" id="XP_016868596.1">
    <property type="nucleotide sequence ID" value="XM_017013107.3"/>
</dbReference>
<dbReference type="SMR" id="Q96KN1"/>
<dbReference type="BioGRID" id="127609">
    <property type="interactions" value="34"/>
</dbReference>
<dbReference type="FunCoup" id="Q96KN1">
    <property type="interactions" value="439"/>
</dbReference>
<dbReference type="IntAct" id="Q96KN1">
    <property type="interactions" value="26"/>
</dbReference>
<dbReference type="MINT" id="Q96KN1"/>
<dbReference type="STRING" id="9606.ENSP00000302578"/>
<dbReference type="iPTMnet" id="Q96KN1"/>
<dbReference type="PhosphoSitePlus" id="Q96KN1"/>
<dbReference type="SwissPalm" id="Q96KN1"/>
<dbReference type="BioMuta" id="FAM84B"/>
<dbReference type="DMDM" id="74732219"/>
<dbReference type="jPOST" id="Q96KN1"/>
<dbReference type="MassIVE" id="Q96KN1"/>
<dbReference type="PaxDb" id="9606-ENSP00000302578"/>
<dbReference type="PeptideAtlas" id="Q96KN1"/>
<dbReference type="ProteomicsDB" id="77084"/>
<dbReference type="Pumba" id="Q96KN1"/>
<dbReference type="Antibodypedia" id="43130">
    <property type="antibodies" value="345 antibodies from 24 providers"/>
</dbReference>
<dbReference type="DNASU" id="157638"/>
<dbReference type="Ensembl" id="ENST00000304916.4">
    <property type="protein sequence ID" value="ENSP00000302578.3"/>
    <property type="gene ID" value="ENSG00000168672.4"/>
</dbReference>
<dbReference type="Ensembl" id="ENST00000652209.1">
    <property type="protein sequence ID" value="ENSP00000498944.1"/>
    <property type="gene ID" value="ENSG00000168672.4"/>
</dbReference>
<dbReference type="GeneID" id="157638"/>
<dbReference type="KEGG" id="hsa:157638"/>
<dbReference type="MANE-Select" id="ENST00000304916.4">
    <property type="protein sequence ID" value="ENSP00000302578.3"/>
    <property type="RefSeq nucleotide sequence ID" value="NM_174911.5"/>
    <property type="RefSeq protein sequence ID" value="NP_777571.1"/>
</dbReference>
<dbReference type="UCSC" id="uc003yrz.3">
    <property type="organism name" value="human"/>
</dbReference>
<dbReference type="AGR" id="HGNC:24166"/>
<dbReference type="CTD" id="157638"/>
<dbReference type="DisGeNET" id="157638"/>
<dbReference type="GeneCards" id="LRATD2"/>
<dbReference type="HGNC" id="HGNC:24166">
    <property type="gene designation" value="LRATD2"/>
</dbReference>
<dbReference type="HPA" id="ENSG00000168672">
    <property type="expression patterns" value="Tissue enhanced (salivary)"/>
</dbReference>
<dbReference type="MIM" id="609483">
    <property type="type" value="gene"/>
</dbReference>
<dbReference type="neXtProt" id="NX_Q96KN1"/>
<dbReference type="OpenTargets" id="ENSG00000168672"/>
<dbReference type="PharmGKB" id="PA142671855"/>
<dbReference type="VEuPathDB" id="HostDB:ENSG00000168672"/>
<dbReference type="eggNOG" id="ENOG502QSKN">
    <property type="taxonomic scope" value="Eukaryota"/>
</dbReference>
<dbReference type="GeneTree" id="ENSGT00940000159198"/>
<dbReference type="HOGENOM" id="CLU_082142_0_0_1"/>
<dbReference type="InParanoid" id="Q96KN1"/>
<dbReference type="OMA" id="MGNQMDK"/>
<dbReference type="OrthoDB" id="6157531at2759"/>
<dbReference type="PAN-GO" id="Q96KN1">
    <property type="GO annotations" value="0 GO annotations based on evolutionary models"/>
</dbReference>
<dbReference type="PhylomeDB" id="Q96KN1"/>
<dbReference type="TreeFam" id="TF330836"/>
<dbReference type="PathwayCommons" id="Q96KN1"/>
<dbReference type="SignaLink" id="Q96KN1"/>
<dbReference type="BioGRID-ORCS" id="157638">
    <property type="hits" value="21 hits in 1140 CRISPR screens"/>
</dbReference>
<dbReference type="ChiTaRS" id="FAM84B">
    <property type="organism name" value="human"/>
</dbReference>
<dbReference type="GenomeRNAi" id="157638"/>
<dbReference type="Pharos" id="Q96KN1">
    <property type="development level" value="Tbio"/>
</dbReference>
<dbReference type="PRO" id="PR:Q96KN1"/>
<dbReference type="Proteomes" id="UP000005640">
    <property type="component" value="Chromosome 8"/>
</dbReference>
<dbReference type="RNAct" id="Q96KN1">
    <property type="molecule type" value="protein"/>
</dbReference>
<dbReference type="Bgee" id="ENSG00000168672">
    <property type="expression patterns" value="Expressed in parotid gland and 183 other cell types or tissues"/>
</dbReference>
<dbReference type="GO" id="GO:0005737">
    <property type="term" value="C:cytoplasm"/>
    <property type="evidence" value="ECO:0000314"/>
    <property type="project" value="HGNC-UCL"/>
</dbReference>
<dbReference type="GO" id="GO:0005886">
    <property type="term" value="C:plasma membrane"/>
    <property type="evidence" value="ECO:0000314"/>
    <property type="project" value="HGNC-UCL"/>
</dbReference>
<dbReference type="FunFam" id="3.90.1720.10:FF:000003">
    <property type="entry name" value="FAM84B isoform 1"/>
    <property type="match status" value="1"/>
</dbReference>
<dbReference type="Gene3D" id="3.90.1720.10">
    <property type="entry name" value="endopeptidase domain like (from Nostoc punctiforme)"/>
    <property type="match status" value="1"/>
</dbReference>
<dbReference type="InterPro" id="IPR007053">
    <property type="entry name" value="LRAT_dom"/>
</dbReference>
<dbReference type="InterPro" id="IPR043299">
    <property type="entry name" value="LRATD1_LRATD2"/>
</dbReference>
<dbReference type="PANTHER" id="PTHR46341">
    <property type="entry name" value="PROTEIN FAM84B-RELATED"/>
    <property type="match status" value="1"/>
</dbReference>
<dbReference type="PANTHER" id="PTHR46341:SF2">
    <property type="entry name" value="PROTEIN LRATD2"/>
    <property type="match status" value="1"/>
</dbReference>
<dbReference type="Pfam" id="PF04970">
    <property type="entry name" value="LRAT"/>
    <property type="match status" value="1"/>
</dbReference>
<dbReference type="PROSITE" id="PS51934">
    <property type="entry name" value="LRAT"/>
    <property type="match status" value="1"/>
</dbReference>
<evidence type="ECO:0000255" key="1">
    <source>
        <dbReference type="PROSITE-ProRule" id="PRU01283"/>
    </source>
</evidence>
<evidence type="ECO:0000256" key="2">
    <source>
        <dbReference type="SAM" id="MobiDB-lite"/>
    </source>
</evidence>
<evidence type="ECO:0000269" key="3">
    <source>
    </source>
</evidence>
<evidence type="ECO:0000305" key="4"/>
<evidence type="ECO:0000312" key="5">
    <source>
        <dbReference type="HGNC" id="HGNC:24166"/>
    </source>
</evidence>
<sequence length="310" mass="34474">MGNQVEKLTHLSYKEVPTADPTGVDRDDGPRIGVSYIFSNDDEDVEPQPPPQGPDGGGLPDGGDGPPPPQPQPYDPRLHEVECSVFYRDECIYQKSFAPGSAALSTYTPENLLNKCKPGDLVEFVSQAQYPHWAVYVGNFQVVHLHRLEVINSFLTDASQGRRGRVVNDLYRYKPLSSSAVVRNALAHVGAKERELSWRNSESFAAWCRYGKREFKIGGELRIGKQPYRLQIQLSAQRSHTLEFQSLEDLIMEKRRNDQIGRAAVLQELATHLHPAEPEEGDSNVARTTPPPGRPPAPSSEEEDGEAVAH</sequence>
<organism>
    <name type="scientific">Homo sapiens</name>
    <name type="common">Human</name>
    <dbReference type="NCBI Taxonomy" id="9606"/>
    <lineage>
        <taxon>Eukaryota</taxon>
        <taxon>Metazoa</taxon>
        <taxon>Chordata</taxon>
        <taxon>Craniata</taxon>
        <taxon>Vertebrata</taxon>
        <taxon>Euteleostomi</taxon>
        <taxon>Mammalia</taxon>
        <taxon>Eutheria</taxon>
        <taxon>Euarchontoglires</taxon>
        <taxon>Primates</taxon>
        <taxon>Haplorrhini</taxon>
        <taxon>Catarrhini</taxon>
        <taxon>Hominidae</taxon>
        <taxon>Homo</taxon>
    </lineage>
</organism>
<proteinExistence type="evidence at protein level"/>
<name>LRAT2_HUMAN</name>
<protein>
    <recommendedName>
        <fullName evidence="4">Protein LRATD2</fullName>
    </recommendedName>
    <alternativeName>
        <fullName>Breast cancer membrane protein 101</fullName>
    </alternativeName>
    <alternativeName>
        <fullName evidence="5">LRAT domain-containing 2</fullName>
    </alternativeName>
    <alternativeName>
        <fullName evidence="4">Protein FAM84B</fullName>
    </alternativeName>
    <alternativeName>
        <fullName>Protein NSE2</fullName>
    </alternativeName>
</protein>
<keyword id="KW-1267">Proteomics identification</keyword>
<keyword id="KW-1185">Reference proteome</keyword>
<reference key="1">
    <citation type="submission" date="2001-10" db="EMBL/GenBank/DDBJ databases">
        <title>A novel NS-containing protein.</title>
        <authorList>
            <person name="Hughes P.J."/>
            <person name="Stanway G."/>
        </authorList>
    </citation>
    <scope>NUCLEOTIDE SEQUENCE [MRNA]</scope>
</reference>
<reference key="2">
    <citation type="journal article" date="2004" name="Genome Res.">
        <title>The status, quality, and expansion of the NIH full-length cDNA project: the Mammalian Gene Collection (MGC).</title>
        <authorList>
            <consortium name="The MGC Project Team"/>
        </authorList>
    </citation>
    <scope>NUCLEOTIDE SEQUENCE [LARGE SCALE MRNA]</scope>
    <source>
        <tissue>Brain</tissue>
    </source>
</reference>
<reference key="3">
    <citation type="journal article" date="2006" name="Cancer Genet. Cytogenet.">
        <title>Negative implication of C-MYC as an amplification target in esophageal cancer.</title>
        <authorList>
            <person name="Huang X.-P."/>
            <person name="Rong T.-H."/>
            <person name="Wang J.-Y."/>
            <person name="Tang Y.-Q."/>
            <person name="Li B.-J."/>
            <person name="Xu D.-R."/>
            <person name="Zhao M.-Q."/>
            <person name="Zhang L.-J."/>
            <person name="Fang Y."/>
            <person name="Su X.-D."/>
            <person name="Liang Q.-W."/>
        </authorList>
    </citation>
    <scope>TISSUE SPECIFICITY</scope>
</reference>
<reference key="4">
    <citation type="journal article" date="2008" name="Proc. Natl. Acad. Sci. U.S.A.">
        <title>A quantitative atlas of mitotic phosphorylation.</title>
        <authorList>
            <person name="Dephoure N."/>
            <person name="Zhou C."/>
            <person name="Villen J."/>
            <person name="Beausoleil S.A."/>
            <person name="Bakalarski C.E."/>
            <person name="Elledge S.J."/>
            <person name="Gygi S.P."/>
        </authorList>
    </citation>
    <scope>IDENTIFICATION BY MASS SPECTROMETRY [LARGE SCALE ANALYSIS]</scope>
    <source>
        <tissue>Cervix carcinoma</tissue>
    </source>
</reference>
<reference key="5">
    <citation type="journal article" date="2011" name="BMC Syst. Biol.">
        <title>Initial characterization of the human central proteome.</title>
        <authorList>
            <person name="Burkard T.R."/>
            <person name="Planyavsky M."/>
            <person name="Kaupe I."/>
            <person name="Breitwieser F.P."/>
            <person name="Buerckstuemmer T."/>
            <person name="Bennett K.L."/>
            <person name="Superti-Furga G."/>
            <person name="Colinge J."/>
        </authorList>
    </citation>
    <scope>IDENTIFICATION BY MASS SPECTROMETRY [LARGE SCALE ANALYSIS]</scope>
</reference>
<accession>Q96KN1</accession>
<feature type="chain" id="PRO_0000234348" description="Protein LRATD2">
    <location>
        <begin position="1"/>
        <end position="310"/>
    </location>
</feature>
<feature type="domain" description="LRAT" evidence="1">
    <location>
        <begin position="122"/>
        <end position="217"/>
    </location>
</feature>
<feature type="region of interest" description="Disordered" evidence="2">
    <location>
        <begin position="1"/>
        <end position="76"/>
    </location>
</feature>
<feature type="region of interest" description="Disordered" evidence="2">
    <location>
        <begin position="274"/>
        <end position="310"/>
    </location>
</feature>
<feature type="compositionally biased region" description="Gly residues" evidence="2">
    <location>
        <begin position="54"/>
        <end position="64"/>
    </location>
</feature>
<feature type="compositionally biased region" description="Pro residues" evidence="2">
    <location>
        <begin position="65"/>
        <end position="74"/>
    </location>
</feature>
<feature type="compositionally biased region" description="Pro residues" evidence="2">
    <location>
        <begin position="289"/>
        <end position="298"/>
    </location>
</feature>
<feature type="compositionally biased region" description="Acidic residues" evidence="2">
    <location>
        <begin position="300"/>
        <end position="310"/>
    </location>
</feature>
<gene>
    <name evidence="5" type="primary">LRATD2</name>
    <name type="synonym">BCMP101</name>
    <name evidence="5" type="synonym">FAM84B</name>
    <name type="synonym">NSE2</name>
</gene>